<name>KTHY_LIGS1</name>
<proteinExistence type="inferred from homology"/>
<keyword id="KW-0067">ATP-binding</keyword>
<keyword id="KW-0418">Kinase</keyword>
<keyword id="KW-0545">Nucleotide biosynthesis</keyword>
<keyword id="KW-0547">Nucleotide-binding</keyword>
<keyword id="KW-1185">Reference proteome</keyword>
<keyword id="KW-0808">Transferase</keyword>
<accession>Q1WSU7</accession>
<reference key="1">
    <citation type="journal article" date="2006" name="Proc. Natl. Acad. Sci. U.S.A.">
        <title>Multireplicon genome architecture of Lactobacillus salivarius.</title>
        <authorList>
            <person name="Claesson M.J."/>
            <person name="Li Y."/>
            <person name="Leahy S."/>
            <person name="Canchaya C."/>
            <person name="van Pijkeren J.P."/>
            <person name="Cerdeno-Tarraga A.M."/>
            <person name="Parkhill J."/>
            <person name="Flynn S."/>
            <person name="O'Sullivan G.C."/>
            <person name="Collins J.K."/>
            <person name="Higgins D."/>
            <person name="Shanahan F."/>
            <person name="Fitzgerald G.F."/>
            <person name="van Sinderen D."/>
            <person name="O'Toole P.W."/>
        </authorList>
    </citation>
    <scope>NUCLEOTIDE SEQUENCE [LARGE SCALE GENOMIC DNA]</scope>
    <source>
        <strain>UCC118</strain>
    </source>
</reference>
<organism>
    <name type="scientific">Ligilactobacillus salivarius (strain UCC118)</name>
    <name type="common">Lactobacillus salivarius</name>
    <dbReference type="NCBI Taxonomy" id="362948"/>
    <lineage>
        <taxon>Bacteria</taxon>
        <taxon>Bacillati</taxon>
        <taxon>Bacillota</taxon>
        <taxon>Bacilli</taxon>
        <taxon>Lactobacillales</taxon>
        <taxon>Lactobacillaceae</taxon>
        <taxon>Ligilactobacillus</taxon>
    </lineage>
</organism>
<gene>
    <name evidence="1" type="primary">tmk</name>
    <name type="ordered locus">LSL_1224</name>
</gene>
<evidence type="ECO:0000255" key="1">
    <source>
        <dbReference type="HAMAP-Rule" id="MF_00165"/>
    </source>
</evidence>
<dbReference type="EC" id="2.7.4.9" evidence="1"/>
<dbReference type="EMBL" id="CP000233">
    <property type="protein sequence ID" value="ABE00032.1"/>
    <property type="molecule type" value="Genomic_DNA"/>
</dbReference>
<dbReference type="RefSeq" id="WP_003700663.1">
    <property type="nucleotide sequence ID" value="NC_007929.1"/>
</dbReference>
<dbReference type="RefSeq" id="YP_536115.1">
    <property type="nucleotide sequence ID" value="NC_007929.1"/>
</dbReference>
<dbReference type="SMR" id="Q1WSU7"/>
<dbReference type="STRING" id="362948.LSL_1224"/>
<dbReference type="KEGG" id="lsl:LSL_1224"/>
<dbReference type="PATRIC" id="fig|362948.14.peg.1298"/>
<dbReference type="HOGENOM" id="CLU_049131_0_2_9"/>
<dbReference type="OrthoDB" id="9774907at2"/>
<dbReference type="Proteomes" id="UP000006559">
    <property type="component" value="Chromosome"/>
</dbReference>
<dbReference type="GO" id="GO:0005829">
    <property type="term" value="C:cytosol"/>
    <property type="evidence" value="ECO:0007669"/>
    <property type="project" value="TreeGrafter"/>
</dbReference>
<dbReference type="GO" id="GO:0005524">
    <property type="term" value="F:ATP binding"/>
    <property type="evidence" value="ECO:0007669"/>
    <property type="project" value="UniProtKB-UniRule"/>
</dbReference>
<dbReference type="GO" id="GO:0004798">
    <property type="term" value="F:dTMP kinase activity"/>
    <property type="evidence" value="ECO:0007669"/>
    <property type="project" value="UniProtKB-UniRule"/>
</dbReference>
<dbReference type="GO" id="GO:0006233">
    <property type="term" value="P:dTDP biosynthetic process"/>
    <property type="evidence" value="ECO:0007669"/>
    <property type="project" value="InterPro"/>
</dbReference>
<dbReference type="GO" id="GO:0006235">
    <property type="term" value="P:dTTP biosynthetic process"/>
    <property type="evidence" value="ECO:0007669"/>
    <property type="project" value="UniProtKB-UniRule"/>
</dbReference>
<dbReference type="GO" id="GO:0006227">
    <property type="term" value="P:dUDP biosynthetic process"/>
    <property type="evidence" value="ECO:0007669"/>
    <property type="project" value="TreeGrafter"/>
</dbReference>
<dbReference type="CDD" id="cd01672">
    <property type="entry name" value="TMPK"/>
    <property type="match status" value="1"/>
</dbReference>
<dbReference type="FunFam" id="3.40.50.300:FF:000225">
    <property type="entry name" value="Thymidylate kinase"/>
    <property type="match status" value="1"/>
</dbReference>
<dbReference type="Gene3D" id="3.40.50.300">
    <property type="entry name" value="P-loop containing nucleotide triphosphate hydrolases"/>
    <property type="match status" value="1"/>
</dbReference>
<dbReference type="HAMAP" id="MF_00165">
    <property type="entry name" value="Thymidylate_kinase"/>
    <property type="match status" value="1"/>
</dbReference>
<dbReference type="InterPro" id="IPR027417">
    <property type="entry name" value="P-loop_NTPase"/>
</dbReference>
<dbReference type="InterPro" id="IPR039430">
    <property type="entry name" value="Thymidylate_kin-like_dom"/>
</dbReference>
<dbReference type="InterPro" id="IPR018095">
    <property type="entry name" value="Thymidylate_kin_CS"/>
</dbReference>
<dbReference type="InterPro" id="IPR018094">
    <property type="entry name" value="Thymidylate_kinase"/>
</dbReference>
<dbReference type="NCBIfam" id="TIGR00041">
    <property type="entry name" value="DTMP_kinase"/>
    <property type="match status" value="1"/>
</dbReference>
<dbReference type="PANTHER" id="PTHR10344">
    <property type="entry name" value="THYMIDYLATE KINASE"/>
    <property type="match status" value="1"/>
</dbReference>
<dbReference type="PANTHER" id="PTHR10344:SF4">
    <property type="entry name" value="UMP-CMP KINASE 2, MITOCHONDRIAL"/>
    <property type="match status" value="1"/>
</dbReference>
<dbReference type="Pfam" id="PF02223">
    <property type="entry name" value="Thymidylate_kin"/>
    <property type="match status" value="1"/>
</dbReference>
<dbReference type="SUPFAM" id="SSF52540">
    <property type="entry name" value="P-loop containing nucleoside triphosphate hydrolases"/>
    <property type="match status" value="1"/>
</dbReference>
<dbReference type="PROSITE" id="PS01331">
    <property type="entry name" value="THYMIDYLATE_KINASE"/>
    <property type="match status" value="1"/>
</dbReference>
<comment type="function">
    <text evidence="1">Phosphorylation of dTMP to form dTDP in both de novo and salvage pathways of dTTP synthesis.</text>
</comment>
<comment type="catalytic activity">
    <reaction evidence="1">
        <text>dTMP + ATP = dTDP + ADP</text>
        <dbReference type="Rhea" id="RHEA:13517"/>
        <dbReference type="ChEBI" id="CHEBI:30616"/>
        <dbReference type="ChEBI" id="CHEBI:58369"/>
        <dbReference type="ChEBI" id="CHEBI:63528"/>
        <dbReference type="ChEBI" id="CHEBI:456216"/>
        <dbReference type="EC" id="2.7.4.9"/>
    </reaction>
</comment>
<comment type="similarity">
    <text evidence="1">Belongs to the thymidylate kinase family.</text>
</comment>
<sequence length="208" mass="23780">MEGKFITFEGIDGSGKTSVLKGVIEHLNDKRIDNYIWTREPGGNRISEAIRKIILNVEYTEMDARTEALLYAAARRQHLVDTVLPALNEGKLVLCDRFVDSSVVYQGVARDIGVEPVIKLNEFATENLKPDLTLYYDVEPEISLKRISNNRQNQVDRLDKESMDFYHKVRQAYLSLAESNKERIKVIDASQNLDKVIDDTLSILNNFM</sequence>
<feature type="chain" id="PRO_1000023212" description="Thymidylate kinase">
    <location>
        <begin position="1"/>
        <end position="208"/>
    </location>
</feature>
<feature type="binding site" evidence="1">
    <location>
        <begin position="10"/>
        <end position="17"/>
    </location>
    <ligand>
        <name>ATP</name>
        <dbReference type="ChEBI" id="CHEBI:30616"/>
    </ligand>
</feature>
<protein>
    <recommendedName>
        <fullName evidence="1">Thymidylate kinase</fullName>
        <ecNumber evidence="1">2.7.4.9</ecNumber>
    </recommendedName>
    <alternativeName>
        <fullName evidence="1">dTMP kinase</fullName>
    </alternativeName>
</protein>